<dbReference type="EC" id="2.4.2.9" evidence="1"/>
<dbReference type="EMBL" id="CP000431">
    <property type="protein sequence ID" value="ABG92092.1"/>
    <property type="molecule type" value="Genomic_DNA"/>
</dbReference>
<dbReference type="RefSeq" id="WP_009472812.1">
    <property type="nucleotide sequence ID" value="NC_008268.1"/>
</dbReference>
<dbReference type="SMR" id="Q0SK44"/>
<dbReference type="KEGG" id="rha:RHA1_ro00256"/>
<dbReference type="eggNOG" id="COG0035">
    <property type="taxonomic scope" value="Bacteria"/>
</dbReference>
<dbReference type="HOGENOM" id="CLU_067096_2_2_11"/>
<dbReference type="OrthoDB" id="9781675at2"/>
<dbReference type="UniPathway" id="UPA00574">
    <property type="reaction ID" value="UER00636"/>
</dbReference>
<dbReference type="Proteomes" id="UP000008710">
    <property type="component" value="Chromosome"/>
</dbReference>
<dbReference type="GO" id="GO:0005525">
    <property type="term" value="F:GTP binding"/>
    <property type="evidence" value="ECO:0007669"/>
    <property type="project" value="UniProtKB-KW"/>
</dbReference>
<dbReference type="GO" id="GO:0000287">
    <property type="term" value="F:magnesium ion binding"/>
    <property type="evidence" value="ECO:0007669"/>
    <property type="project" value="UniProtKB-UniRule"/>
</dbReference>
<dbReference type="GO" id="GO:0004845">
    <property type="term" value="F:uracil phosphoribosyltransferase activity"/>
    <property type="evidence" value="ECO:0007669"/>
    <property type="project" value="UniProtKB-UniRule"/>
</dbReference>
<dbReference type="GO" id="GO:0044206">
    <property type="term" value="P:UMP salvage"/>
    <property type="evidence" value="ECO:0007669"/>
    <property type="project" value="UniProtKB-UniRule"/>
</dbReference>
<dbReference type="GO" id="GO:0006223">
    <property type="term" value="P:uracil salvage"/>
    <property type="evidence" value="ECO:0007669"/>
    <property type="project" value="InterPro"/>
</dbReference>
<dbReference type="CDD" id="cd06223">
    <property type="entry name" value="PRTases_typeI"/>
    <property type="match status" value="1"/>
</dbReference>
<dbReference type="FunFam" id="3.40.50.2020:FF:000003">
    <property type="entry name" value="Uracil phosphoribosyltransferase"/>
    <property type="match status" value="1"/>
</dbReference>
<dbReference type="Gene3D" id="3.40.50.2020">
    <property type="match status" value="1"/>
</dbReference>
<dbReference type="HAMAP" id="MF_01218_B">
    <property type="entry name" value="Upp_B"/>
    <property type="match status" value="1"/>
</dbReference>
<dbReference type="InterPro" id="IPR000836">
    <property type="entry name" value="PRibTrfase_dom"/>
</dbReference>
<dbReference type="InterPro" id="IPR029057">
    <property type="entry name" value="PRTase-like"/>
</dbReference>
<dbReference type="InterPro" id="IPR034332">
    <property type="entry name" value="Upp_B"/>
</dbReference>
<dbReference type="InterPro" id="IPR050054">
    <property type="entry name" value="UPRTase/APRTase"/>
</dbReference>
<dbReference type="InterPro" id="IPR005765">
    <property type="entry name" value="Ura_phspho_trans"/>
</dbReference>
<dbReference type="NCBIfam" id="NF001097">
    <property type="entry name" value="PRK00129.1"/>
    <property type="match status" value="1"/>
</dbReference>
<dbReference type="NCBIfam" id="TIGR01091">
    <property type="entry name" value="upp"/>
    <property type="match status" value="1"/>
</dbReference>
<dbReference type="PANTHER" id="PTHR32315">
    <property type="entry name" value="ADENINE PHOSPHORIBOSYLTRANSFERASE"/>
    <property type="match status" value="1"/>
</dbReference>
<dbReference type="PANTHER" id="PTHR32315:SF4">
    <property type="entry name" value="URACIL PHOSPHORIBOSYLTRANSFERASE, CHLOROPLASTIC"/>
    <property type="match status" value="1"/>
</dbReference>
<dbReference type="Pfam" id="PF14681">
    <property type="entry name" value="UPRTase"/>
    <property type="match status" value="1"/>
</dbReference>
<dbReference type="SUPFAM" id="SSF53271">
    <property type="entry name" value="PRTase-like"/>
    <property type="match status" value="1"/>
</dbReference>
<reference key="1">
    <citation type="journal article" date="2006" name="Proc. Natl. Acad. Sci. U.S.A.">
        <title>The complete genome of Rhodococcus sp. RHA1 provides insights into a catabolic powerhouse.</title>
        <authorList>
            <person name="McLeod M.P."/>
            <person name="Warren R.L."/>
            <person name="Hsiao W.W.L."/>
            <person name="Araki N."/>
            <person name="Myhre M."/>
            <person name="Fernandes C."/>
            <person name="Miyazawa D."/>
            <person name="Wong W."/>
            <person name="Lillquist A.L."/>
            <person name="Wang D."/>
            <person name="Dosanjh M."/>
            <person name="Hara H."/>
            <person name="Petrescu A."/>
            <person name="Morin R.D."/>
            <person name="Yang G."/>
            <person name="Stott J.M."/>
            <person name="Schein J.E."/>
            <person name="Shin H."/>
            <person name="Smailus D."/>
            <person name="Siddiqui A.S."/>
            <person name="Marra M.A."/>
            <person name="Jones S.J.M."/>
            <person name="Holt R."/>
            <person name="Brinkman F.S.L."/>
            <person name="Miyauchi K."/>
            <person name="Fukuda M."/>
            <person name="Davies J.E."/>
            <person name="Mohn W.W."/>
            <person name="Eltis L.D."/>
        </authorList>
    </citation>
    <scope>NUCLEOTIDE SEQUENCE [LARGE SCALE GENOMIC DNA]</scope>
    <source>
        <strain>RHA1</strain>
    </source>
</reference>
<comment type="function">
    <text evidence="1">Catalyzes the conversion of uracil and 5-phospho-alpha-D-ribose 1-diphosphate (PRPP) to UMP and diphosphate.</text>
</comment>
<comment type="catalytic activity">
    <reaction evidence="1">
        <text>UMP + diphosphate = 5-phospho-alpha-D-ribose 1-diphosphate + uracil</text>
        <dbReference type="Rhea" id="RHEA:13017"/>
        <dbReference type="ChEBI" id="CHEBI:17568"/>
        <dbReference type="ChEBI" id="CHEBI:33019"/>
        <dbReference type="ChEBI" id="CHEBI:57865"/>
        <dbReference type="ChEBI" id="CHEBI:58017"/>
        <dbReference type="EC" id="2.4.2.9"/>
    </reaction>
</comment>
<comment type="cofactor">
    <cofactor evidence="1">
        <name>Mg(2+)</name>
        <dbReference type="ChEBI" id="CHEBI:18420"/>
    </cofactor>
    <text evidence="1">Binds 1 Mg(2+) ion per subunit. The magnesium is bound as Mg-PRPP.</text>
</comment>
<comment type="activity regulation">
    <text evidence="1">Allosterically activated by GTP.</text>
</comment>
<comment type="pathway">
    <text evidence="1">Pyrimidine metabolism; UMP biosynthesis via salvage pathway; UMP from uracil: step 1/1.</text>
</comment>
<comment type="similarity">
    <text evidence="1">Belongs to the UPRTase family.</text>
</comment>
<organism>
    <name type="scientific">Rhodococcus jostii (strain RHA1)</name>
    <dbReference type="NCBI Taxonomy" id="101510"/>
    <lineage>
        <taxon>Bacteria</taxon>
        <taxon>Bacillati</taxon>
        <taxon>Actinomycetota</taxon>
        <taxon>Actinomycetes</taxon>
        <taxon>Mycobacteriales</taxon>
        <taxon>Nocardiaceae</taxon>
        <taxon>Rhodococcus</taxon>
    </lineage>
</organism>
<feature type="chain" id="PRO_1000053773" description="Uracil phosphoribosyltransferase">
    <location>
        <begin position="1"/>
        <end position="209"/>
    </location>
</feature>
<feature type="binding site" evidence="1">
    <location>
        <position position="79"/>
    </location>
    <ligand>
        <name>5-phospho-alpha-D-ribose 1-diphosphate</name>
        <dbReference type="ChEBI" id="CHEBI:58017"/>
    </ligand>
</feature>
<feature type="binding site" evidence="1">
    <location>
        <position position="104"/>
    </location>
    <ligand>
        <name>5-phospho-alpha-D-ribose 1-diphosphate</name>
        <dbReference type="ChEBI" id="CHEBI:58017"/>
    </ligand>
</feature>
<feature type="binding site" evidence="1">
    <location>
        <begin position="131"/>
        <end position="139"/>
    </location>
    <ligand>
        <name>5-phospho-alpha-D-ribose 1-diphosphate</name>
        <dbReference type="ChEBI" id="CHEBI:58017"/>
    </ligand>
</feature>
<feature type="binding site" evidence="1">
    <location>
        <position position="194"/>
    </location>
    <ligand>
        <name>uracil</name>
        <dbReference type="ChEBI" id="CHEBI:17568"/>
    </ligand>
</feature>
<feature type="binding site" evidence="1">
    <location>
        <begin position="199"/>
        <end position="201"/>
    </location>
    <ligand>
        <name>uracil</name>
        <dbReference type="ChEBI" id="CHEBI:17568"/>
    </ligand>
</feature>
<feature type="binding site" evidence="1">
    <location>
        <position position="200"/>
    </location>
    <ligand>
        <name>5-phospho-alpha-D-ribose 1-diphosphate</name>
        <dbReference type="ChEBI" id="CHEBI:58017"/>
    </ligand>
</feature>
<proteinExistence type="inferred from homology"/>
<gene>
    <name evidence="1" type="primary">upp</name>
    <name type="ordered locus">RHA1_ro00256</name>
</gene>
<name>UPP_RHOJR</name>
<evidence type="ECO:0000255" key="1">
    <source>
        <dbReference type="HAMAP-Rule" id="MF_01218"/>
    </source>
</evidence>
<protein>
    <recommendedName>
        <fullName evidence="1">Uracil phosphoribosyltransferase</fullName>
        <ecNumber evidence="1">2.4.2.9</ecNumber>
    </recommendedName>
    <alternativeName>
        <fullName evidence="1">UMP pyrophosphorylase</fullName>
    </alternativeName>
    <alternativeName>
        <fullName evidence="1">UPRTase</fullName>
    </alternativeName>
</protein>
<sequence>MGTVHVIEHPLVQHKLTMMRRKDASTNSFRRLANEISALMTYEVLRDIPMQEIDVETPLEFTTGKVIDGKKLVFVSILRAGTGILDGMLTIVPGARVGHIGLYRDPKTLGAVEYYFKMPGDLQERDVVVIDPMLATGNSAVAAVERLKECGPKSIKFVCLLTCPEGVAALHKAHPDVPIYTAAVDRQLDEHGYILPGIGDAGDRLFGTK</sequence>
<accession>Q0SK44</accession>
<keyword id="KW-0021">Allosteric enzyme</keyword>
<keyword id="KW-0328">Glycosyltransferase</keyword>
<keyword id="KW-0342">GTP-binding</keyword>
<keyword id="KW-0460">Magnesium</keyword>
<keyword id="KW-0547">Nucleotide-binding</keyword>
<keyword id="KW-0808">Transferase</keyword>